<accession>B2S9W9</accession>
<dbReference type="EC" id="1.17.7.4" evidence="1"/>
<dbReference type="EMBL" id="CP000887">
    <property type="protein sequence ID" value="ACD71999.1"/>
    <property type="molecule type" value="Genomic_DNA"/>
</dbReference>
<dbReference type="RefSeq" id="WP_002963633.1">
    <property type="nucleotide sequence ID" value="NC_010742.1"/>
</dbReference>
<dbReference type="SMR" id="B2S9W9"/>
<dbReference type="GeneID" id="97534156"/>
<dbReference type="KEGG" id="bmc:BAbS19_I04640"/>
<dbReference type="HOGENOM" id="CLU_027486_1_0_5"/>
<dbReference type="UniPathway" id="UPA00056">
    <property type="reaction ID" value="UER00097"/>
</dbReference>
<dbReference type="UniPathway" id="UPA00059">
    <property type="reaction ID" value="UER00105"/>
</dbReference>
<dbReference type="Proteomes" id="UP000002565">
    <property type="component" value="Chromosome 1"/>
</dbReference>
<dbReference type="GO" id="GO:0051539">
    <property type="term" value="F:4 iron, 4 sulfur cluster binding"/>
    <property type="evidence" value="ECO:0007669"/>
    <property type="project" value="UniProtKB-UniRule"/>
</dbReference>
<dbReference type="GO" id="GO:0051745">
    <property type="term" value="F:4-hydroxy-3-methylbut-2-enyl diphosphate reductase activity"/>
    <property type="evidence" value="ECO:0007669"/>
    <property type="project" value="UniProtKB-UniRule"/>
</dbReference>
<dbReference type="GO" id="GO:0046872">
    <property type="term" value="F:metal ion binding"/>
    <property type="evidence" value="ECO:0007669"/>
    <property type="project" value="UniProtKB-KW"/>
</dbReference>
<dbReference type="GO" id="GO:0050992">
    <property type="term" value="P:dimethylallyl diphosphate biosynthetic process"/>
    <property type="evidence" value="ECO:0007669"/>
    <property type="project" value="UniProtKB-UniRule"/>
</dbReference>
<dbReference type="GO" id="GO:0019288">
    <property type="term" value="P:isopentenyl diphosphate biosynthetic process, methylerythritol 4-phosphate pathway"/>
    <property type="evidence" value="ECO:0007669"/>
    <property type="project" value="UniProtKB-UniRule"/>
</dbReference>
<dbReference type="GO" id="GO:0016114">
    <property type="term" value="P:terpenoid biosynthetic process"/>
    <property type="evidence" value="ECO:0007669"/>
    <property type="project" value="UniProtKB-UniRule"/>
</dbReference>
<dbReference type="CDD" id="cd13944">
    <property type="entry name" value="lytB_ispH"/>
    <property type="match status" value="1"/>
</dbReference>
<dbReference type="Gene3D" id="3.40.50.11270">
    <property type="match status" value="1"/>
</dbReference>
<dbReference type="Gene3D" id="3.40.1010.20">
    <property type="entry name" value="4-hydroxy-3-methylbut-2-enyl diphosphate reductase, catalytic domain"/>
    <property type="match status" value="2"/>
</dbReference>
<dbReference type="HAMAP" id="MF_00191">
    <property type="entry name" value="IspH"/>
    <property type="match status" value="1"/>
</dbReference>
<dbReference type="InterPro" id="IPR003451">
    <property type="entry name" value="LytB/IspH"/>
</dbReference>
<dbReference type="NCBIfam" id="TIGR00216">
    <property type="entry name" value="ispH_lytB"/>
    <property type="match status" value="1"/>
</dbReference>
<dbReference type="NCBIfam" id="NF002190">
    <property type="entry name" value="PRK01045.1-4"/>
    <property type="match status" value="1"/>
</dbReference>
<dbReference type="PANTHER" id="PTHR30426">
    <property type="entry name" value="4-HYDROXY-3-METHYLBUT-2-ENYL DIPHOSPHATE REDUCTASE"/>
    <property type="match status" value="1"/>
</dbReference>
<dbReference type="PANTHER" id="PTHR30426:SF0">
    <property type="entry name" value="4-HYDROXY-3-METHYLBUT-2-ENYL DIPHOSPHATE REDUCTASE"/>
    <property type="match status" value="1"/>
</dbReference>
<dbReference type="Pfam" id="PF02401">
    <property type="entry name" value="LYTB"/>
    <property type="match status" value="1"/>
</dbReference>
<proteinExistence type="inferred from homology"/>
<sequence length="346" mass="37738">MTQQRPPLEIRLCGPRGFCAGVDRAIQIVVLALKKYGAPVYVRHEIVHNRYVVEGLQARGAIFVEELDEIPAAHRNQPVVFSAHGVPKSVPADAEAKNLFYLDATCPLVSKVHKQAMRHQRLGRHVILIGHSGHPEVIGTMGQLPDGAVTLIETVEDAHTCHFDDEDNLGFVTQTTLSVDDTAGIIKELQARFPNLAAPAAESICYATTNRQDAVRAAAPGCDLFLIVGAPNSSNSKRLVEVAEKAGARMSMLVQRAEDIEWEQIGDISVVGLSAGASAPEIIVDEIIDAFKARFDVKIELAETTVETENFLVNREIRDVELTVKDMAFVNGEHRVVGISKLMQGK</sequence>
<name>ISPH_BRUA1</name>
<keyword id="KW-0004">4Fe-4S</keyword>
<keyword id="KW-0408">Iron</keyword>
<keyword id="KW-0411">Iron-sulfur</keyword>
<keyword id="KW-0414">Isoprene biosynthesis</keyword>
<keyword id="KW-0479">Metal-binding</keyword>
<keyword id="KW-0560">Oxidoreductase</keyword>
<evidence type="ECO:0000255" key="1">
    <source>
        <dbReference type="HAMAP-Rule" id="MF_00191"/>
    </source>
</evidence>
<organism>
    <name type="scientific">Brucella abortus (strain S19)</name>
    <dbReference type="NCBI Taxonomy" id="430066"/>
    <lineage>
        <taxon>Bacteria</taxon>
        <taxon>Pseudomonadati</taxon>
        <taxon>Pseudomonadota</taxon>
        <taxon>Alphaproteobacteria</taxon>
        <taxon>Hyphomicrobiales</taxon>
        <taxon>Brucellaceae</taxon>
        <taxon>Brucella/Ochrobactrum group</taxon>
        <taxon>Brucella</taxon>
    </lineage>
</organism>
<reference key="1">
    <citation type="journal article" date="2008" name="PLoS ONE">
        <title>Genome sequence of Brucella abortus vaccine strain S19 compared to virulent strains yields candidate virulence genes.</title>
        <authorList>
            <person name="Crasta O.R."/>
            <person name="Folkerts O."/>
            <person name="Fei Z."/>
            <person name="Mane S.P."/>
            <person name="Evans C."/>
            <person name="Martino-Catt S."/>
            <person name="Bricker B."/>
            <person name="Yu G."/>
            <person name="Du L."/>
            <person name="Sobral B.W."/>
        </authorList>
    </citation>
    <scope>NUCLEOTIDE SEQUENCE [LARGE SCALE GENOMIC DNA]</scope>
    <source>
        <strain>S19</strain>
    </source>
</reference>
<protein>
    <recommendedName>
        <fullName evidence="1">4-hydroxy-3-methylbut-2-enyl diphosphate reductase</fullName>
        <shortName evidence="1">HMBPP reductase</shortName>
        <ecNumber evidence="1">1.17.7.4</ecNumber>
    </recommendedName>
</protein>
<feature type="chain" id="PRO_1000098935" description="4-hydroxy-3-methylbut-2-enyl diphosphate reductase">
    <location>
        <begin position="1"/>
        <end position="346"/>
    </location>
</feature>
<feature type="active site" description="Proton donor" evidence="1">
    <location>
        <position position="136"/>
    </location>
</feature>
<feature type="binding site" evidence="1">
    <location>
        <position position="19"/>
    </location>
    <ligand>
        <name>[4Fe-4S] cluster</name>
        <dbReference type="ChEBI" id="CHEBI:49883"/>
    </ligand>
</feature>
<feature type="binding site" evidence="1">
    <location>
        <position position="48"/>
    </location>
    <ligand>
        <name>(2E)-4-hydroxy-3-methylbut-2-enyl diphosphate</name>
        <dbReference type="ChEBI" id="CHEBI:128753"/>
    </ligand>
</feature>
<feature type="binding site" evidence="1">
    <location>
        <position position="48"/>
    </location>
    <ligand>
        <name>dimethylallyl diphosphate</name>
        <dbReference type="ChEBI" id="CHEBI:57623"/>
    </ligand>
</feature>
<feature type="binding site" evidence="1">
    <location>
        <position position="48"/>
    </location>
    <ligand>
        <name>isopentenyl diphosphate</name>
        <dbReference type="ChEBI" id="CHEBI:128769"/>
    </ligand>
</feature>
<feature type="binding site" evidence="1">
    <location>
        <position position="84"/>
    </location>
    <ligand>
        <name>(2E)-4-hydroxy-3-methylbut-2-enyl diphosphate</name>
        <dbReference type="ChEBI" id="CHEBI:128753"/>
    </ligand>
</feature>
<feature type="binding site" evidence="1">
    <location>
        <position position="84"/>
    </location>
    <ligand>
        <name>dimethylallyl diphosphate</name>
        <dbReference type="ChEBI" id="CHEBI:57623"/>
    </ligand>
</feature>
<feature type="binding site" evidence="1">
    <location>
        <position position="84"/>
    </location>
    <ligand>
        <name>isopentenyl diphosphate</name>
        <dbReference type="ChEBI" id="CHEBI:128769"/>
    </ligand>
</feature>
<feature type="binding site" evidence="1">
    <location>
        <position position="106"/>
    </location>
    <ligand>
        <name>[4Fe-4S] cluster</name>
        <dbReference type="ChEBI" id="CHEBI:49883"/>
    </ligand>
</feature>
<feature type="binding site" evidence="1">
    <location>
        <position position="134"/>
    </location>
    <ligand>
        <name>(2E)-4-hydroxy-3-methylbut-2-enyl diphosphate</name>
        <dbReference type="ChEBI" id="CHEBI:128753"/>
    </ligand>
</feature>
<feature type="binding site" evidence="1">
    <location>
        <position position="134"/>
    </location>
    <ligand>
        <name>dimethylallyl diphosphate</name>
        <dbReference type="ChEBI" id="CHEBI:57623"/>
    </ligand>
</feature>
<feature type="binding site" evidence="1">
    <location>
        <position position="134"/>
    </location>
    <ligand>
        <name>isopentenyl diphosphate</name>
        <dbReference type="ChEBI" id="CHEBI:128769"/>
    </ligand>
</feature>
<feature type="binding site" evidence="1">
    <location>
        <position position="175"/>
    </location>
    <ligand>
        <name>(2E)-4-hydroxy-3-methylbut-2-enyl diphosphate</name>
        <dbReference type="ChEBI" id="CHEBI:128753"/>
    </ligand>
</feature>
<feature type="binding site" evidence="1">
    <location>
        <position position="205"/>
    </location>
    <ligand>
        <name>[4Fe-4S] cluster</name>
        <dbReference type="ChEBI" id="CHEBI:49883"/>
    </ligand>
</feature>
<feature type="binding site" evidence="1">
    <location>
        <position position="233"/>
    </location>
    <ligand>
        <name>(2E)-4-hydroxy-3-methylbut-2-enyl diphosphate</name>
        <dbReference type="ChEBI" id="CHEBI:128753"/>
    </ligand>
</feature>
<feature type="binding site" evidence="1">
    <location>
        <position position="233"/>
    </location>
    <ligand>
        <name>dimethylallyl diphosphate</name>
        <dbReference type="ChEBI" id="CHEBI:57623"/>
    </ligand>
</feature>
<feature type="binding site" evidence="1">
    <location>
        <position position="233"/>
    </location>
    <ligand>
        <name>isopentenyl diphosphate</name>
        <dbReference type="ChEBI" id="CHEBI:128769"/>
    </ligand>
</feature>
<feature type="binding site" evidence="1">
    <location>
        <position position="234"/>
    </location>
    <ligand>
        <name>(2E)-4-hydroxy-3-methylbut-2-enyl diphosphate</name>
        <dbReference type="ChEBI" id="CHEBI:128753"/>
    </ligand>
</feature>
<feature type="binding site" evidence="1">
    <location>
        <position position="234"/>
    </location>
    <ligand>
        <name>dimethylallyl diphosphate</name>
        <dbReference type="ChEBI" id="CHEBI:57623"/>
    </ligand>
</feature>
<feature type="binding site" evidence="1">
    <location>
        <position position="234"/>
    </location>
    <ligand>
        <name>isopentenyl diphosphate</name>
        <dbReference type="ChEBI" id="CHEBI:128769"/>
    </ligand>
</feature>
<feature type="binding site" evidence="1">
    <location>
        <position position="235"/>
    </location>
    <ligand>
        <name>(2E)-4-hydroxy-3-methylbut-2-enyl diphosphate</name>
        <dbReference type="ChEBI" id="CHEBI:128753"/>
    </ligand>
</feature>
<feature type="binding site" evidence="1">
    <location>
        <position position="235"/>
    </location>
    <ligand>
        <name>dimethylallyl diphosphate</name>
        <dbReference type="ChEBI" id="CHEBI:57623"/>
    </ligand>
</feature>
<feature type="binding site" evidence="1">
    <location>
        <position position="235"/>
    </location>
    <ligand>
        <name>isopentenyl diphosphate</name>
        <dbReference type="ChEBI" id="CHEBI:128769"/>
    </ligand>
</feature>
<feature type="binding site" evidence="1">
    <location>
        <position position="278"/>
    </location>
    <ligand>
        <name>(2E)-4-hydroxy-3-methylbut-2-enyl diphosphate</name>
        <dbReference type="ChEBI" id="CHEBI:128753"/>
    </ligand>
</feature>
<feature type="binding site" evidence="1">
    <location>
        <position position="278"/>
    </location>
    <ligand>
        <name>dimethylallyl diphosphate</name>
        <dbReference type="ChEBI" id="CHEBI:57623"/>
    </ligand>
</feature>
<feature type="binding site" evidence="1">
    <location>
        <position position="278"/>
    </location>
    <ligand>
        <name>isopentenyl diphosphate</name>
        <dbReference type="ChEBI" id="CHEBI:128769"/>
    </ligand>
</feature>
<comment type="function">
    <text evidence="1">Catalyzes the conversion of 1-hydroxy-2-methyl-2-(E)-butenyl 4-diphosphate (HMBPP) into a mixture of isopentenyl diphosphate (IPP) and dimethylallyl diphosphate (DMAPP). Acts in the terminal step of the DOXP/MEP pathway for isoprenoid precursor biosynthesis.</text>
</comment>
<comment type="catalytic activity">
    <reaction evidence="1">
        <text>isopentenyl diphosphate + 2 oxidized [2Fe-2S]-[ferredoxin] + H2O = (2E)-4-hydroxy-3-methylbut-2-enyl diphosphate + 2 reduced [2Fe-2S]-[ferredoxin] + 2 H(+)</text>
        <dbReference type="Rhea" id="RHEA:24488"/>
        <dbReference type="Rhea" id="RHEA-COMP:10000"/>
        <dbReference type="Rhea" id="RHEA-COMP:10001"/>
        <dbReference type="ChEBI" id="CHEBI:15377"/>
        <dbReference type="ChEBI" id="CHEBI:15378"/>
        <dbReference type="ChEBI" id="CHEBI:33737"/>
        <dbReference type="ChEBI" id="CHEBI:33738"/>
        <dbReference type="ChEBI" id="CHEBI:128753"/>
        <dbReference type="ChEBI" id="CHEBI:128769"/>
        <dbReference type="EC" id="1.17.7.4"/>
    </reaction>
</comment>
<comment type="catalytic activity">
    <reaction evidence="1">
        <text>dimethylallyl diphosphate + 2 oxidized [2Fe-2S]-[ferredoxin] + H2O = (2E)-4-hydroxy-3-methylbut-2-enyl diphosphate + 2 reduced [2Fe-2S]-[ferredoxin] + 2 H(+)</text>
        <dbReference type="Rhea" id="RHEA:24825"/>
        <dbReference type="Rhea" id="RHEA-COMP:10000"/>
        <dbReference type="Rhea" id="RHEA-COMP:10001"/>
        <dbReference type="ChEBI" id="CHEBI:15377"/>
        <dbReference type="ChEBI" id="CHEBI:15378"/>
        <dbReference type="ChEBI" id="CHEBI:33737"/>
        <dbReference type="ChEBI" id="CHEBI:33738"/>
        <dbReference type="ChEBI" id="CHEBI:57623"/>
        <dbReference type="ChEBI" id="CHEBI:128753"/>
        <dbReference type="EC" id="1.17.7.4"/>
    </reaction>
</comment>
<comment type="cofactor">
    <cofactor evidence="1">
        <name>[4Fe-4S] cluster</name>
        <dbReference type="ChEBI" id="CHEBI:49883"/>
    </cofactor>
    <text evidence="1">Binds 1 [4Fe-4S] cluster per subunit.</text>
</comment>
<comment type="pathway">
    <text evidence="1">Isoprenoid biosynthesis; dimethylallyl diphosphate biosynthesis; dimethylallyl diphosphate from (2E)-4-hydroxy-3-methylbutenyl diphosphate: step 1/1.</text>
</comment>
<comment type="pathway">
    <text evidence="1">Isoprenoid biosynthesis; isopentenyl diphosphate biosynthesis via DXP pathway; isopentenyl diphosphate from 1-deoxy-D-xylulose 5-phosphate: step 6/6.</text>
</comment>
<comment type="similarity">
    <text evidence="1">Belongs to the IspH family.</text>
</comment>
<gene>
    <name evidence="1" type="primary">ispH</name>
    <name type="ordered locus">BAbS19_I04640</name>
</gene>